<reference key="1">
    <citation type="journal article" date="2007" name="PLoS Genet.">
        <title>The complete genome sequence of Yersinia pseudotuberculosis IP31758, the causative agent of Far East scarlet-like fever.</title>
        <authorList>
            <person name="Eppinger M."/>
            <person name="Rosovitz M.J."/>
            <person name="Fricke W.F."/>
            <person name="Rasko D.A."/>
            <person name="Kokorina G."/>
            <person name="Fayolle C."/>
            <person name="Lindler L.E."/>
            <person name="Carniel E."/>
            <person name="Ravel J."/>
        </authorList>
    </citation>
    <scope>NUCLEOTIDE SEQUENCE [LARGE SCALE GENOMIC DNA]</scope>
    <source>
        <strain>IP 31758</strain>
    </source>
</reference>
<feature type="chain" id="PRO_1000084770" description="tRNA pseudouridine synthase D">
    <location>
        <begin position="1"/>
        <end position="349"/>
    </location>
</feature>
<feature type="domain" description="TRUD" evidence="1">
    <location>
        <begin position="154"/>
        <end position="302"/>
    </location>
</feature>
<feature type="active site" description="Nucleophile" evidence="1">
    <location>
        <position position="79"/>
    </location>
</feature>
<feature type="binding site" evidence="1">
    <location>
        <position position="26"/>
    </location>
    <ligand>
        <name>substrate</name>
    </ligand>
</feature>
<feature type="binding site" evidence="1">
    <location>
        <position position="128"/>
    </location>
    <ligand>
        <name>substrate</name>
    </ligand>
</feature>
<feature type="binding site" evidence="1">
    <location>
        <position position="328"/>
    </location>
    <ligand>
        <name>substrate</name>
    </ligand>
</feature>
<comment type="function">
    <text evidence="1">Responsible for synthesis of pseudouridine from uracil-13 in transfer RNAs.</text>
</comment>
<comment type="catalytic activity">
    <reaction evidence="1">
        <text>uridine(13) in tRNA = pseudouridine(13) in tRNA</text>
        <dbReference type="Rhea" id="RHEA:42540"/>
        <dbReference type="Rhea" id="RHEA-COMP:10105"/>
        <dbReference type="Rhea" id="RHEA-COMP:10106"/>
        <dbReference type="ChEBI" id="CHEBI:65314"/>
        <dbReference type="ChEBI" id="CHEBI:65315"/>
        <dbReference type="EC" id="5.4.99.27"/>
    </reaction>
</comment>
<comment type="similarity">
    <text evidence="1">Belongs to the pseudouridine synthase TruD family.</text>
</comment>
<gene>
    <name evidence="1" type="primary">truD</name>
    <name type="ordered locus">YpsIP31758_3297</name>
</gene>
<proteinExistence type="inferred from homology"/>
<accession>A7FLX6</accession>
<sequence length="349" mass="39148">MDMENLTWLHGKPTASGILKANPEDFVVVEDLGFEPDGEGEHLLVRIRKNGCNTQFVADYLARFAKLHPRLVSYAGLKDRHAVTEQWFCLHLPGKEAPDLATFELEGCEVLEAVRHKRKLRIGSLKGNAFTLVLRHITDRQDVEQRLQQIAAQGVPNYFGSQRFGRGGNNLVQARLWANNEIRVKERSKRSFYLSASRSAMFNLISSHRLAQQLSTTVLEGDALQLSGRGSWFVAQADELATLQQRVTAGELNITAPLPGDSELGTHGEALAFEQACLAEQTELLSLIKRERVEGSRRAVLLKPQNMISNWWDDVTLELSFWLPAGSFATSVVREIMNQDRADDTDIIE</sequence>
<protein>
    <recommendedName>
        <fullName evidence="1">tRNA pseudouridine synthase D</fullName>
        <ecNumber evidence="1">5.4.99.27</ecNumber>
    </recommendedName>
    <alternativeName>
        <fullName evidence="1">tRNA pseudouridine(13) synthase</fullName>
    </alternativeName>
    <alternativeName>
        <fullName evidence="1">tRNA pseudouridylate synthase D</fullName>
    </alternativeName>
    <alternativeName>
        <fullName evidence="1">tRNA-uridine isomerase D</fullName>
    </alternativeName>
</protein>
<evidence type="ECO:0000255" key="1">
    <source>
        <dbReference type="HAMAP-Rule" id="MF_01082"/>
    </source>
</evidence>
<organism>
    <name type="scientific">Yersinia pseudotuberculosis serotype O:1b (strain IP 31758)</name>
    <dbReference type="NCBI Taxonomy" id="349747"/>
    <lineage>
        <taxon>Bacteria</taxon>
        <taxon>Pseudomonadati</taxon>
        <taxon>Pseudomonadota</taxon>
        <taxon>Gammaproteobacteria</taxon>
        <taxon>Enterobacterales</taxon>
        <taxon>Yersiniaceae</taxon>
        <taxon>Yersinia</taxon>
    </lineage>
</organism>
<dbReference type="EC" id="5.4.99.27" evidence="1"/>
<dbReference type="EMBL" id="CP000720">
    <property type="protein sequence ID" value="ABS48455.1"/>
    <property type="molecule type" value="Genomic_DNA"/>
</dbReference>
<dbReference type="RefSeq" id="WP_011191777.1">
    <property type="nucleotide sequence ID" value="NC_009708.1"/>
</dbReference>
<dbReference type="SMR" id="A7FLX6"/>
<dbReference type="KEGG" id="ypi:YpsIP31758_3297"/>
<dbReference type="HOGENOM" id="CLU_005281_4_0_6"/>
<dbReference type="Proteomes" id="UP000002412">
    <property type="component" value="Chromosome"/>
</dbReference>
<dbReference type="GO" id="GO:0005829">
    <property type="term" value="C:cytosol"/>
    <property type="evidence" value="ECO:0007669"/>
    <property type="project" value="TreeGrafter"/>
</dbReference>
<dbReference type="GO" id="GO:0003723">
    <property type="term" value="F:RNA binding"/>
    <property type="evidence" value="ECO:0007669"/>
    <property type="project" value="InterPro"/>
</dbReference>
<dbReference type="GO" id="GO:0160150">
    <property type="term" value="F:tRNA pseudouridine(13) synthase activity"/>
    <property type="evidence" value="ECO:0007669"/>
    <property type="project" value="UniProtKB-EC"/>
</dbReference>
<dbReference type="GO" id="GO:0031119">
    <property type="term" value="P:tRNA pseudouridine synthesis"/>
    <property type="evidence" value="ECO:0007669"/>
    <property type="project" value="UniProtKB-UniRule"/>
</dbReference>
<dbReference type="CDD" id="cd02575">
    <property type="entry name" value="PseudoU_synth_EcTruD"/>
    <property type="match status" value="1"/>
</dbReference>
<dbReference type="FunFam" id="3.30.2340.10:FF:000001">
    <property type="entry name" value="tRNA pseudouridine synthase D"/>
    <property type="match status" value="1"/>
</dbReference>
<dbReference type="FunFam" id="3.30.2350.20:FF:000001">
    <property type="entry name" value="tRNA pseudouridine synthase D"/>
    <property type="match status" value="1"/>
</dbReference>
<dbReference type="Gene3D" id="3.30.2350.20">
    <property type="entry name" value="TruD, catalytic domain"/>
    <property type="match status" value="1"/>
</dbReference>
<dbReference type="Gene3D" id="3.30.2340.10">
    <property type="entry name" value="TruD, insertion domain"/>
    <property type="match status" value="1"/>
</dbReference>
<dbReference type="HAMAP" id="MF_01082">
    <property type="entry name" value="TruD"/>
    <property type="match status" value="1"/>
</dbReference>
<dbReference type="InterPro" id="IPR020103">
    <property type="entry name" value="PsdUridine_synth_cat_dom_sf"/>
</dbReference>
<dbReference type="InterPro" id="IPR001656">
    <property type="entry name" value="PsdUridine_synth_TruD"/>
</dbReference>
<dbReference type="InterPro" id="IPR020119">
    <property type="entry name" value="PsdUridine_synth_TruD_CS"/>
</dbReference>
<dbReference type="InterPro" id="IPR011760">
    <property type="entry name" value="PsdUridine_synth_TruD_insert"/>
</dbReference>
<dbReference type="InterPro" id="IPR042214">
    <property type="entry name" value="TruD_catalytic"/>
</dbReference>
<dbReference type="InterPro" id="IPR043165">
    <property type="entry name" value="TruD_insert_sf"/>
</dbReference>
<dbReference type="InterPro" id="IPR050170">
    <property type="entry name" value="TruD_pseudoU_synthase"/>
</dbReference>
<dbReference type="NCBIfam" id="NF002155">
    <property type="entry name" value="PRK00984.1-4"/>
    <property type="match status" value="1"/>
</dbReference>
<dbReference type="NCBIfam" id="TIGR00094">
    <property type="entry name" value="tRNA_TruD_broad"/>
    <property type="match status" value="1"/>
</dbReference>
<dbReference type="PANTHER" id="PTHR47811">
    <property type="entry name" value="TRNA PSEUDOURIDINE SYNTHASE D"/>
    <property type="match status" value="1"/>
</dbReference>
<dbReference type="PANTHER" id="PTHR47811:SF1">
    <property type="entry name" value="TRNA PSEUDOURIDINE SYNTHASE D"/>
    <property type="match status" value="1"/>
</dbReference>
<dbReference type="Pfam" id="PF01142">
    <property type="entry name" value="TruD"/>
    <property type="match status" value="2"/>
</dbReference>
<dbReference type="SUPFAM" id="SSF55120">
    <property type="entry name" value="Pseudouridine synthase"/>
    <property type="match status" value="1"/>
</dbReference>
<dbReference type="PROSITE" id="PS50984">
    <property type="entry name" value="TRUD"/>
    <property type="match status" value="1"/>
</dbReference>
<dbReference type="PROSITE" id="PS01268">
    <property type="entry name" value="UPF0024"/>
    <property type="match status" value="1"/>
</dbReference>
<keyword id="KW-0413">Isomerase</keyword>
<keyword id="KW-0819">tRNA processing</keyword>
<name>TRUD_YERP3</name>